<name>PFF1_TALMQ</name>
<reference key="1">
    <citation type="journal article" date="2015" name="Genome Announc.">
        <title>Genome sequence of the AIDS-associated pathogen Penicillium marneffei (ATCC18224) and its near taxonomic relative Talaromyces stipitatus (ATCC10500).</title>
        <authorList>
            <person name="Nierman W.C."/>
            <person name="Fedorova-Abrams N.D."/>
            <person name="Andrianopoulos A."/>
        </authorList>
    </citation>
    <scope>NUCLEOTIDE SEQUENCE [LARGE SCALE GENOMIC DNA]</scope>
    <source>
        <strain>ATCC 18224 / CBS 334.59 / QM 7333</strain>
    </source>
</reference>
<comment type="function">
    <text evidence="1">May be involved in vacuolar sorting and osmoregulation.</text>
</comment>
<comment type="cofactor">
    <cofactor evidence="2">
        <name>Zn(2+)</name>
        <dbReference type="ChEBI" id="CHEBI:29105"/>
    </cofactor>
    <text evidence="2">Binds 2 Zn(2+) ions per subunit.</text>
</comment>
<comment type="subcellular location">
    <subcellularLocation>
        <location evidence="1">Vacuole membrane</location>
        <topology evidence="3">Multi-pass membrane protein</topology>
    </subcellularLocation>
</comment>
<comment type="similarity">
    <text evidence="6">Belongs to the peptidase M28 family.</text>
</comment>
<sequence>MARSRTAGRCNPFAFYRVPVTVFVTLIYVALLAPIIVVHHILPAVPESDVEGLDLHEAWRDLQHLTNGFHPYNSHKNDEVRSWLLTRIDEIVSTNVKDAKQQDGVRTFVFDDNQSNLTVVQSNLGVYFEGTNIIVYICGQEDDKREWWKEPGLSPSGKGGVLVNAHYDSVSTGYGATDDGVGVISCLQLIKYFTTPGHEPTRGLVVLLNNGEEDFLNGARVYSQHPISKLPHTFLNLEGAGAGGRATLFRSSDTEVTKFYQRSPYPFGSVFSDAGFKLGMIRSQTDYIVFEGDMGLRGLDVAFMEPRARYHTNQDDAKHTSQQSLWHMLSAAVATTEGLVSDTSHDFEGRPQGPGKVPSGTGSGAVWFDLFGTAFAVFEIHTLFALSVTLLIVGPLTLFITSIILANQDRMYLFGISVPVDDGFGSVPLRGWRGFFRFPFIFGSTTASVVALAYLMAKINPMIAHSSEYAVWSMMISAWVFVAWFLSRIANFARPSALHRIYVLTWMFLLTWVLLVITTVYENRDGIASGYFVIFYAFGTFMATWISYLELFSLPKKSDFANKVSGQISSRPTSLGGSRLLTPSGESVGQHPEDEEPTESTSLLRGQRTSFANYTRPVEDDGDGDLLSTGVSTDVSEARDFNVYGYEQPWSANLPKWTWILQFLLIAPIVIILIGQLGLLITSAIHQTMQDGSSTLVPYLIIALLTTFLFMPTLPFIHRYTYHIPTFLFLIFVATLVYNLVAFPFSGNNRTKLFFLQEVDLDTGANRVSLTGIQPFVSDAVASIPSADGQNISCIPKMDRTECSWESSLVPHVITHPGSEKEETPLNEWVKYKATRLEPGSQNSNRAQIKISGLNTRGCLLHFDKPITRFHVTGSAIDSRFPSNPSLEDGTEDGVREIRLWSRTWGNQWVVDAEWASDEDVNNEEDTLTGKATCLWSDANTQGAIPALDEVIQYSPDWVAITKLDAGLVKGSRSFEV</sequence>
<accession>B6Q656</accession>
<gene>
    <name type="ORF">PMAA_024220</name>
</gene>
<feature type="chain" id="PRO_0000411732" description="Vacuolar membrane protease">
    <location>
        <begin position="1"/>
        <end position="977"/>
    </location>
</feature>
<feature type="topological domain" description="Cytoplasmic" evidence="1">
    <location>
        <begin position="1"/>
        <end position="17"/>
    </location>
</feature>
<feature type="transmembrane region" description="Helical; Name=1" evidence="3">
    <location>
        <begin position="18"/>
        <end position="38"/>
    </location>
</feature>
<feature type="topological domain" description="Vacuolar" evidence="1">
    <location>
        <begin position="39"/>
        <end position="383"/>
    </location>
</feature>
<feature type="transmembrane region" description="Helical; Name=2" evidence="3">
    <location>
        <begin position="384"/>
        <end position="404"/>
    </location>
</feature>
<feature type="topological domain" description="Cytoplasmic" evidence="1">
    <location>
        <begin position="405"/>
        <end position="438"/>
    </location>
</feature>
<feature type="transmembrane region" description="Helical; Name=3" evidence="3">
    <location>
        <begin position="439"/>
        <end position="459"/>
    </location>
</feature>
<feature type="topological domain" description="Vacuolar" evidence="1">
    <location>
        <begin position="460"/>
        <end position="469"/>
    </location>
</feature>
<feature type="transmembrane region" description="Helical; Name=4" evidence="3">
    <location>
        <begin position="470"/>
        <end position="490"/>
    </location>
</feature>
<feature type="topological domain" description="Cytoplasmic" evidence="1">
    <location>
        <begin position="491"/>
        <end position="500"/>
    </location>
</feature>
<feature type="transmembrane region" description="Helical; Name=5" evidence="3">
    <location>
        <begin position="501"/>
        <end position="521"/>
    </location>
</feature>
<feature type="topological domain" description="Vacuolar" evidence="1">
    <location>
        <begin position="522"/>
        <end position="525"/>
    </location>
</feature>
<feature type="transmembrane region" description="Helical; Name=6" evidence="3">
    <location>
        <begin position="526"/>
        <end position="546"/>
    </location>
</feature>
<feature type="topological domain" description="Cytoplasmic" evidence="1">
    <location>
        <begin position="547"/>
        <end position="659"/>
    </location>
</feature>
<feature type="transmembrane region" description="Helical; Name=7" evidence="3">
    <location>
        <begin position="660"/>
        <end position="680"/>
    </location>
</feature>
<feature type="topological domain" description="Vacuolar" evidence="1">
    <location>
        <begin position="681"/>
        <end position="696"/>
    </location>
</feature>
<feature type="transmembrane region" description="Helical; Name=8" evidence="3">
    <location>
        <begin position="697"/>
        <end position="717"/>
    </location>
</feature>
<feature type="topological domain" description="Cytoplasmic" evidence="1">
    <location>
        <begin position="718"/>
        <end position="726"/>
    </location>
</feature>
<feature type="transmembrane region" description="Helical; Name=9" evidence="3">
    <location>
        <begin position="727"/>
        <end position="747"/>
    </location>
</feature>
<feature type="topological domain" description="Vacuolar" evidence="1">
    <location>
        <begin position="748"/>
        <end position="977"/>
    </location>
</feature>
<feature type="region of interest" description="Disordered" evidence="5">
    <location>
        <begin position="566"/>
        <end position="604"/>
    </location>
</feature>
<feature type="compositionally biased region" description="Polar residues" evidence="5">
    <location>
        <begin position="566"/>
        <end position="576"/>
    </location>
</feature>
<feature type="active site" description="Proton acceptor" evidence="2">
    <location>
        <position position="212"/>
    </location>
</feature>
<feature type="binding site" evidence="2">
    <location>
        <position position="166"/>
    </location>
    <ligand>
        <name>Zn(2+)</name>
        <dbReference type="ChEBI" id="CHEBI:29105"/>
        <label>1</label>
        <note>catalytic</note>
    </ligand>
</feature>
<feature type="binding site" evidence="2">
    <location>
        <position position="178"/>
    </location>
    <ligand>
        <name>Zn(2+)</name>
        <dbReference type="ChEBI" id="CHEBI:29105"/>
        <label>1</label>
        <note>catalytic</note>
    </ligand>
</feature>
<feature type="binding site" evidence="2">
    <location>
        <position position="178"/>
    </location>
    <ligand>
        <name>Zn(2+)</name>
        <dbReference type="ChEBI" id="CHEBI:29105"/>
        <label>2</label>
        <note>catalytic</note>
    </ligand>
</feature>
<feature type="binding site" evidence="2">
    <location>
        <position position="213"/>
    </location>
    <ligand>
        <name>Zn(2+)</name>
        <dbReference type="ChEBI" id="CHEBI:29105"/>
        <label>2</label>
        <note>catalytic</note>
    </ligand>
</feature>
<feature type="binding site" evidence="2">
    <location>
        <position position="238"/>
    </location>
    <ligand>
        <name>Zn(2+)</name>
        <dbReference type="ChEBI" id="CHEBI:29105"/>
        <label>1</label>
        <note>catalytic</note>
    </ligand>
</feature>
<feature type="binding site" evidence="2">
    <location>
        <position position="311"/>
    </location>
    <ligand>
        <name>Zn(2+)</name>
        <dbReference type="ChEBI" id="CHEBI:29105"/>
        <label>2</label>
        <note>catalytic</note>
    </ligand>
</feature>
<feature type="site" description="Transition state stabilizer" evidence="2">
    <location>
        <position position="310"/>
    </location>
</feature>
<feature type="glycosylation site" description="N-linked (GlcNAc...) asparagine" evidence="4">
    <location>
        <position position="113"/>
    </location>
</feature>
<feature type="glycosylation site" description="N-linked (GlcNAc...) asparagine" evidence="4">
    <location>
        <position position="116"/>
    </location>
</feature>
<feature type="glycosylation site" description="N-linked (GlcNAc...) asparagine" evidence="4">
    <location>
        <position position="749"/>
    </location>
</feature>
<feature type="glycosylation site" description="N-linked (GlcNAc...) asparagine" evidence="4">
    <location>
        <position position="791"/>
    </location>
</feature>
<protein>
    <recommendedName>
        <fullName evidence="1">Vacuolar membrane protease</fullName>
        <ecNumber evidence="6">3.4.-.-</ecNumber>
    </recommendedName>
    <alternativeName>
        <fullName evidence="1">FXNA-related family protease 1</fullName>
    </alternativeName>
</protein>
<dbReference type="EC" id="3.4.-.-" evidence="6"/>
<dbReference type="EMBL" id="DS995899">
    <property type="protein sequence ID" value="EEA27551.1"/>
    <property type="molecule type" value="Genomic_DNA"/>
</dbReference>
<dbReference type="RefSeq" id="XP_002144066.1">
    <property type="nucleotide sequence ID" value="XM_002144030.1"/>
</dbReference>
<dbReference type="SMR" id="B6Q656"/>
<dbReference type="STRING" id="441960.B6Q656"/>
<dbReference type="VEuPathDB" id="FungiDB:PMAA_024220"/>
<dbReference type="HOGENOM" id="CLU_006412_1_0_1"/>
<dbReference type="OrthoDB" id="7593at28568"/>
<dbReference type="PhylomeDB" id="B6Q656"/>
<dbReference type="Proteomes" id="UP000001294">
    <property type="component" value="Unassembled WGS sequence"/>
</dbReference>
<dbReference type="GO" id="GO:0005774">
    <property type="term" value="C:vacuolar membrane"/>
    <property type="evidence" value="ECO:0007669"/>
    <property type="project" value="UniProtKB-SubCell"/>
</dbReference>
<dbReference type="GO" id="GO:0046872">
    <property type="term" value="F:metal ion binding"/>
    <property type="evidence" value="ECO:0007669"/>
    <property type="project" value="UniProtKB-KW"/>
</dbReference>
<dbReference type="GO" id="GO:0008235">
    <property type="term" value="F:metalloexopeptidase activity"/>
    <property type="evidence" value="ECO:0007669"/>
    <property type="project" value="InterPro"/>
</dbReference>
<dbReference type="GO" id="GO:0006508">
    <property type="term" value="P:proteolysis"/>
    <property type="evidence" value="ECO:0007669"/>
    <property type="project" value="UniProtKB-KW"/>
</dbReference>
<dbReference type="CDD" id="cd03875">
    <property type="entry name" value="M28_Fxna_like"/>
    <property type="match status" value="1"/>
</dbReference>
<dbReference type="FunFam" id="3.40.630.10:FF:000057">
    <property type="entry name" value="Vacuolar membrane protease"/>
    <property type="match status" value="1"/>
</dbReference>
<dbReference type="Gene3D" id="3.40.630.10">
    <property type="entry name" value="Zn peptidases"/>
    <property type="match status" value="1"/>
</dbReference>
<dbReference type="InterPro" id="IPR048024">
    <property type="entry name" value="Fxna-like_M28_dom"/>
</dbReference>
<dbReference type="InterPro" id="IPR045175">
    <property type="entry name" value="M28_fam"/>
</dbReference>
<dbReference type="InterPro" id="IPR007484">
    <property type="entry name" value="Peptidase_M28"/>
</dbReference>
<dbReference type="InterPro" id="IPR053975">
    <property type="entry name" value="PFF1_C"/>
</dbReference>
<dbReference type="InterPro" id="IPR053976">
    <property type="entry name" value="PFF1_TM"/>
</dbReference>
<dbReference type="PANTHER" id="PTHR12147">
    <property type="entry name" value="METALLOPEPTIDASE M28 FAMILY MEMBER"/>
    <property type="match status" value="1"/>
</dbReference>
<dbReference type="PANTHER" id="PTHR12147:SF58">
    <property type="entry name" value="VACUOLAR MEMBRANE PROTEASE"/>
    <property type="match status" value="1"/>
</dbReference>
<dbReference type="Pfam" id="PF04389">
    <property type="entry name" value="Peptidase_M28"/>
    <property type="match status" value="1"/>
</dbReference>
<dbReference type="Pfam" id="PF22250">
    <property type="entry name" value="PFF1_C"/>
    <property type="match status" value="1"/>
</dbReference>
<dbReference type="Pfam" id="PF22251">
    <property type="entry name" value="PFF1_TM"/>
    <property type="match status" value="1"/>
</dbReference>
<dbReference type="SUPFAM" id="SSF53187">
    <property type="entry name" value="Zn-dependent exopeptidases"/>
    <property type="match status" value="1"/>
</dbReference>
<evidence type="ECO:0000250" key="1">
    <source>
        <dbReference type="UniProtKB" id="P38244"/>
    </source>
</evidence>
<evidence type="ECO:0000250" key="2">
    <source>
        <dbReference type="UniProtKB" id="P80561"/>
    </source>
</evidence>
<evidence type="ECO:0000255" key="3"/>
<evidence type="ECO:0000255" key="4">
    <source>
        <dbReference type="PROSITE-ProRule" id="PRU00498"/>
    </source>
</evidence>
<evidence type="ECO:0000256" key="5">
    <source>
        <dbReference type="SAM" id="MobiDB-lite"/>
    </source>
</evidence>
<evidence type="ECO:0000305" key="6"/>
<proteinExistence type="inferred from homology"/>
<keyword id="KW-0325">Glycoprotein</keyword>
<keyword id="KW-0378">Hydrolase</keyword>
<keyword id="KW-0472">Membrane</keyword>
<keyword id="KW-0479">Metal-binding</keyword>
<keyword id="KW-0482">Metalloprotease</keyword>
<keyword id="KW-0645">Protease</keyword>
<keyword id="KW-1185">Reference proteome</keyword>
<keyword id="KW-0812">Transmembrane</keyword>
<keyword id="KW-1133">Transmembrane helix</keyword>
<keyword id="KW-0926">Vacuole</keyword>
<keyword id="KW-0862">Zinc</keyword>
<organism>
    <name type="scientific">Talaromyces marneffei (strain ATCC 18224 / CBS 334.59 / QM 7333)</name>
    <name type="common">Penicillium marneffei</name>
    <dbReference type="NCBI Taxonomy" id="441960"/>
    <lineage>
        <taxon>Eukaryota</taxon>
        <taxon>Fungi</taxon>
        <taxon>Dikarya</taxon>
        <taxon>Ascomycota</taxon>
        <taxon>Pezizomycotina</taxon>
        <taxon>Eurotiomycetes</taxon>
        <taxon>Eurotiomycetidae</taxon>
        <taxon>Eurotiales</taxon>
        <taxon>Trichocomaceae</taxon>
        <taxon>Talaromyces</taxon>
        <taxon>Talaromyces sect. Talaromyces</taxon>
    </lineage>
</organism>